<comment type="function">
    <text evidence="2">Catalyzes the synthesis of cyclic GMP (cGMP) in rods and cones of photoreceptors. Plays an essential role in phototransduction, by mediating cGMP replenishment. May also participate in the trafficking of membrane-asociated proteins to the photoreceptor outer segment membrane.</text>
</comment>
<comment type="catalytic activity">
    <reaction evidence="9">
        <text>GTP = 3',5'-cyclic GMP + diphosphate</text>
        <dbReference type="Rhea" id="RHEA:13665"/>
        <dbReference type="ChEBI" id="CHEBI:33019"/>
        <dbReference type="ChEBI" id="CHEBI:37565"/>
        <dbReference type="ChEBI" id="CHEBI:57746"/>
        <dbReference type="EC" id="4.6.1.2"/>
    </reaction>
</comment>
<comment type="activity regulation">
    <text evidence="2 4">Activated by GUCA1A when free calcium ions concentration is low, and inhibited by GUCA1A when free calcium ions concentration is high (By similarity). Negatively regulated by RD3; inhibits the basal and GUCA1A-stimulated guanylate cyclase activity (By similarity).</text>
</comment>
<comment type="subunit">
    <text evidence="4 10">Homodimer; requires homodimerization for guanylyl cyclase activity (PubMed:9153227). Interacts (via C-terminus) with RD3 (via C-terminus); promotes the exit of GUCY2E from the endoplasmic reticulum and its trafficking to the photoreceptor outer segments (By similarity). Interaction with RD3 negatively regulates GUCY2E guanylate cyclase activity (By similarity).</text>
</comment>
<comment type="subcellular location">
    <subcellularLocation>
        <location evidence="9">Membrane</location>
        <topology>Single-pass type I membrane protein</topology>
    </subcellularLocation>
    <subcellularLocation>
        <location evidence="9 10">Photoreceptor outer segment membrane</location>
        <topology>Single-pass type I membrane protein</topology>
    </subcellularLocation>
    <subcellularLocation>
        <location evidence="4">Endoplasmic reticulum membrane</location>
        <topology evidence="5">Single-pass type I membrane protein</topology>
    </subcellularLocation>
</comment>
<comment type="tissue specificity">
    <text evidence="10">Expressed in retina and enriched in photoreceptor outer segments.</text>
</comment>
<comment type="PTM">
    <text>There are 9 conserved cysteine residues in sensory guanylate cyclases, 6 in the extracellular domain, which may be involved in intra- or interchain disulfide bonds.</text>
</comment>
<comment type="similarity">
    <text evidence="6">Belongs to the adenylyl cyclase class-4/guanylyl cyclase family.</text>
</comment>
<keyword id="KW-0966">Cell projection</keyword>
<keyword id="KW-0141">cGMP biosynthesis</keyword>
<keyword id="KW-0903">Direct protein sequencing</keyword>
<keyword id="KW-1015">Disulfide bond</keyword>
<keyword id="KW-0256">Endoplasmic reticulum</keyword>
<keyword id="KW-0325">Glycoprotein</keyword>
<keyword id="KW-0342">GTP-binding</keyword>
<keyword id="KW-0456">Lyase</keyword>
<keyword id="KW-0472">Membrane</keyword>
<keyword id="KW-0547">Nucleotide-binding</keyword>
<keyword id="KW-1185">Reference proteome</keyword>
<keyword id="KW-0716">Sensory transduction</keyword>
<keyword id="KW-0732">Signal</keyword>
<keyword id="KW-0812">Transmembrane</keyword>
<keyword id="KW-1133">Transmembrane helix</keyword>
<keyword id="KW-0844">Vision</keyword>
<accession>P51840</accession>
<protein>
    <recommendedName>
        <fullName>Retinal guanylyl cyclase 1</fullName>
        <shortName>RETGC-1</shortName>
        <ecNumber evidence="9">4.6.1.2</ecNumber>
    </recommendedName>
    <alternativeName>
        <fullName>Guanylate cyclase 2E</fullName>
    </alternativeName>
    <alternativeName>
        <fullName>Guanylyl cyclase GC-E</fullName>
    </alternativeName>
</protein>
<gene>
    <name type="primary">Gucy2e</name>
    <name type="synonym">Guc2e</name>
    <name evidence="11" type="synonym">Gucy2d</name>
</gene>
<reference key="1">
    <citation type="journal article" date="1995" name="Proc. Natl. Acad. Sci. U.S.A.">
        <title>Two membrane forms of guanylyl cyclase found in the eye.</title>
        <authorList>
            <person name="Yang R.-B."/>
            <person name="Foster D.C."/>
            <person name="Garbers D.L."/>
            <person name="Fuelle H.-J."/>
        </authorList>
    </citation>
    <scope>NUCLEOTIDE SEQUENCE [MRNA]</scope>
    <scope>CATALYTIC ACTIVITY</scope>
    <scope>SUBCELLULAR LOCATION</scope>
    <source>
        <strain>Sprague-Dawley</strain>
        <tissue>Eye</tissue>
    </source>
</reference>
<reference key="2">
    <citation type="journal article" date="1997" name="J. Biol. Chem.">
        <title>Two eye guanylyl cyclases are expressed in the same photoreceptor cells and form homomers in preference to heteromers.</title>
        <authorList>
            <person name="Yang R.B."/>
            <person name="Garbers D.L."/>
        </authorList>
    </citation>
    <scope>SUBUNIT</scope>
    <scope>TISSUE SPECIFICITY</scope>
    <scope>SUBCELLULAR LOCATION</scope>
</reference>
<reference key="3">
    <citation type="submission" date="2007-07" db="UniProtKB">
        <authorList>
            <person name="Lubec G."/>
            <person name="Kang S.U."/>
        </authorList>
    </citation>
    <scope>PROTEIN SEQUENCE OF 203-209</scope>
    <scope>IDENTIFICATION BY MASS SPECTROMETRY</scope>
    <source>
        <strain>Sprague-Dawley</strain>
        <tissue>Brain</tissue>
    </source>
</reference>
<name>GUC2E_RAT</name>
<sequence length="1108" mass="120801">MSAWLLPAGGFPGAGFCIPAWQSRSSLSRVLRWPGPGLPGLLLLLLLPSPSAFSAVFKVGVLGPWACDPIFARARPDLAARLATDRLNRDLALDGGPWFEVTLLPEPCLTPGSLGAVSSALTRVSGLVGPVNPAACRPAELLAQEAGVALVPWGCPGTRAAGTTAPAVTPAADALYVLLKAFRWARVALITAPQDLWVEAGRALSTALRARGLPVALVTSMVPSDLSGAREALRRIRDGPRVRVVIMVMHSVLLGGEEQRYLLEAAEELGLTDGSLVFLPFDTLHYALSPGPEALAAFVNSSKLRRAHDAVLTLTRRCPPGGSVQDSLRRAQEHQELPLDLDLKQVSPLFGTIYDAVFLLAGGVTRARAAVGGGWVSGASVARQMREAQVFGFCGILGRTEEPSFVLLDTDAAGERLFTTHLLDPVLGSLRSAGTPVHFPRGAPAPGPDPSCWFDPDVICNGGVEPGLVFVGFLLVIVVGLTGAFLAHYLRHRLLHMQMVSGPNKIILTLEDVTFLHPQGGSSRKVAQGSRSSLATRSTSDIRSVPSQPQESTNIGLYEGDWVWLKKFPGEHHMAIRPATKMAFSKLRELRHENVALYLGLFLAGTADSPATPGEGILAVVSEHCARGSLHDLLAQRDIKLDWMFKSSLLLDLIKGMRYLHHRGVAHGRLKSRNCVVDGRFVLKVTDHGHGRLLEAQRVLPEPPSAEDQLWTAPELLRDPALERRGTLAGDVFSLGIIMQEVVCRSTPYAMLELTPEEVIQRVRSPPPLCRPLVSMDQAPMECIQLMAQCWAEHPELRPSMDLTFDLFKGINKGRKTNIIDSMLRMLEQYSSNLEDLIRERTEELEQEKQKTDRLLTQMLPPSVAEALKMGTSVEPEYFEEVTLYFSDIVGFTTISAMSEPIEVVDLLNDLYTLFDAIIGSHDVYKVETIGDAYMVASGLPQRNGQRHAAEIANMSLDILSAVGSFRMRHMPEVPVRIRIGLHSGPCVAGVVGLTMPRYCLFGDTVNTASRMESTGLPYRIHVNMSTVRILRALDQGFQMECRGRTELKGKGVEDTYWLVGRVGFNKPIPKPPDLQPGASNHGISLQEIPPERRKKLEKARPGQFTGK</sequence>
<proteinExistence type="evidence at protein level"/>
<evidence type="ECO:0000250" key="1"/>
<evidence type="ECO:0000250" key="2">
    <source>
        <dbReference type="UniProtKB" id="P52785"/>
    </source>
</evidence>
<evidence type="ECO:0000250" key="3">
    <source>
        <dbReference type="UniProtKB" id="P55203"/>
    </source>
</evidence>
<evidence type="ECO:0000250" key="4">
    <source>
        <dbReference type="UniProtKB" id="Q02846"/>
    </source>
</evidence>
<evidence type="ECO:0000255" key="5"/>
<evidence type="ECO:0000255" key="6">
    <source>
        <dbReference type="PROSITE-ProRule" id="PRU00099"/>
    </source>
</evidence>
<evidence type="ECO:0000255" key="7">
    <source>
        <dbReference type="PROSITE-ProRule" id="PRU00159"/>
    </source>
</evidence>
<evidence type="ECO:0000256" key="8">
    <source>
        <dbReference type="SAM" id="MobiDB-lite"/>
    </source>
</evidence>
<evidence type="ECO:0000269" key="9">
    <source>
    </source>
</evidence>
<evidence type="ECO:0000269" key="10">
    <source>
    </source>
</evidence>
<evidence type="ECO:0000312" key="11">
    <source>
        <dbReference type="RGD" id="620438"/>
    </source>
</evidence>
<organism>
    <name type="scientific">Rattus norvegicus</name>
    <name type="common">Rat</name>
    <dbReference type="NCBI Taxonomy" id="10116"/>
    <lineage>
        <taxon>Eukaryota</taxon>
        <taxon>Metazoa</taxon>
        <taxon>Chordata</taxon>
        <taxon>Craniata</taxon>
        <taxon>Vertebrata</taxon>
        <taxon>Euteleostomi</taxon>
        <taxon>Mammalia</taxon>
        <taxon>Eutheria</taxon>
        <taxon>Euarchontoglires</taxon>
        <taxon>Glires</taxon>
        <taxon>Rodentia</taxon>
        <taxon>Myomorpha</taxon>
        <taxon>Muroidea</taxon>
        <taxon>Muridae</taxon>
        <taxon>Murinae</taxon>
        <taxon>Rattus</taxon>
    </lineage>
</organism>
<dbReference type="EC" id="4.6.1.2" evidence="9"/>
<dbReference type="EMBL" id="L36029">
    <property type="protein sequence ID" value="AAA65510.1"/>
    <property type="molecule type" value="mRNA"/>
</dbReference>
<dbReference type="PIR" id="A55915">
    <property type="entry name" value="A55915"/>
</dbReference>
<dbReference type="RefSeq" id="NP_077356.1">
    <property type="nucleotide sequence ID" value="NM_024380.1"/>
</dbReference>
<dbReference type="SMR" id="P51840"/>
<dbReference type="FunCoup" id="P51840">
    <property type="interactions" value="1015"/>
</dbReference>
<dbReference type="STRING" id="10116.ENSRNOP00000010790"/>
<dbReference type="GlyCosmos" id="P51840">
    <property type="glycosylation" value="1 site, No reported glycans"/>
</dbReference>
<dbReference type="GlyGen" id="P51840">
    <property type="glycosylation" value="3 sites"/>
</dbReference>
<dbReference type="iPTMnet" id="P51840"/>
<dbReference type="PhosphoSitePlus" id="P51840"/>
<dbReference type="PaxDb" id="10116-ENSRNOP00000010790"/>
<dbReference type="Ensembl" id="ENSRNOT00000010790.5">
    <property type="protein sequence ID" value="ENSRNOP00000010790.5"/>
    <property type="gene ID" value="ENSRNOG00000007931.5"/>
</dbReference>
<dbReference type="GeneID" id="79222"/>
<dbReference type="KEGG" id="rno:79222"/>
<dbReference type="UCSC" id="RGD:620438">
    <property type="organism name" value="rat"/>
</dbReference>
<dbReference type="AGR" id="RGD:620438"/>
<dbReference type="CTD" id="3000"/>
<dbReference type="RGD" id="620438">
    <property type="gene designation" value="Gucy2e"/>
</dbReference>
<dbReference type="eggNOG" id="KOG1023">
    <property type="taxonomic scope" value="Eukaryota"/>
</dbReference>
<dbReference type="InParanoid" id="P51840"/>
<dbReference type="OMA" id="NIGVYEG"/>
<dbReference type="OrthoDB" id="1890790at2759"/>
<dbReference type="PhylomeDB" id="P51840"/>
<dbReference type="TreeFam" id="TF106338"/>
<dbReference type="Reactome" id="R-RNO-2514859">
    <property type="pathway name" value="Inactivation, recovery and regulation of the phototransduction cascade"/>
</dbReference>
<dbReference type="PRO" id="PR:P51840"/>
<dbReference type="Proteomes" id="UP000002494">
    <property type="component" value="Chromosome 10"/>
</dbReference>
<dbReference type="GO" id="GO:0005789">
    <property type="term" value="C:endoplasmic reticulum membrane"/>
    <property type="evidence" value="ECO:0000250"/>
    <property type="project" value="UniProtKB"/>
</dbReference>
<dbReference type="GO" id="GO:0001750">
    <property type="term" value="C:photoreceptor outer segment"/>
    <property type="evidence" value="ECO:0000266"/>
    <property type="project" value="RGD"/>
</dbReference>
<dbReference type="GO" id="GO:0042622">
    <property type="term" value="C:photoreceptor outer segment membrane"/>
    <property type="evidence" value="ECO:0000314"/>
    <property type="project" value="UniProtKB"/>
</dbReference>
<dbReference type="GO" id="GO:0005886">
    <property type="term" value="C:plasma membrane"/>
    <property type="evidence" value="ECO:0000318"/>
    <property type="project" value="GO_Central"/>
</dbReference>
<dbReference type="GO" id="GO:0005524">
    <property type="term" value="F:ATP binding"/>
    <property type="evidence" value="ECO:0007669"/>
    <property type="project" value="InterPro"/>
</dbReference>
<dbReference type="GO" id="GO:0005525">
    <property type="term" value="F:GTP binding"/>
    <property type="evidence" value="ECO:0007669"/>
    <property type="project" value="UniProtKB-KW"/>
</dbReference>
<dbReference type="GO" id="GO:0004383">
    <property type="term" value="F:guanylate cyclase activity"/>
    <property type="evidence" value="ECO:0000314"/>
    <property type="project" value="RGD"/>
</dbReference>
<dbReference type="GO" id="GO:0042802">
    <property type="term" value="F:identical protein binding"/>
    <property type="evidence" value="ECO:0000353"/>
    <property type="project" value="RGD"/>
</dbReference>
<dbReference type="GO" id="GO:0001653">
    <property type="term" value="F:peptide receptor activity"/>
    <property type="evidence" value="ECO:0000318"/>
    <property type="project" value="GO_Central"/>
</dbReference>
<dbReference type="GO" id="GO:0042803">
    <property type="term" value="F:protein homodimerization activity"/>
    <property type="evidence" value="ECO:0000314"/>
    <property type="project" value="UniProtKB"/>
</dbReference>
<dbReference type="GO" id="GO:0004672">
    <property type="term" value="F:protein kinase activity"/>
    <property type="evidence" value="ECO:0007669"/>
    <property type="project" value="InterPro"/>
</dbReference>
<dbReference type="GO" id="GO:0044877">
    <property type="term" value="F:protein-containing complex binding"/>
    <property type="evidence" value="ECO:0000353"/>
    <property type="project" value="RGD"/>
</dbReference>
<dbReference type="GO" id="GO:0006182">
    <property type="term" value="P:cGMP biosynthetic process"/>
    <property type="evidence" value="ECO:0000266"/>
    <property type="project" value="RGD"/>
</dbReference>
<dbReference type="GO" id="GO:0019934">
    <property type="term" value="P:cGMP-mediated signaling"/>
    <property type="evidence" value="ECO:0000314"/>
    <property type="project" value="RGD"/>
</dbReference>
<dbReference type="GO" id="GO:0007168">
    <property type="term" value="P:receptor guanylyl cyclase signaling pathway"/>
    <property type="evidence" value="ECO:0000318"/>
    <property type="project" value="GO_Central"/>
</dbReference>
<dbReference type="GO" id="GO:0007601">
    <property type="term" value="P:visual perception"/>
    <property type="evidence" value="ECO:0007669"/>
    <property type="project" value="UniProtKB-KW"/>
</dbReference>
<dbReference type="CDD" id="cd07302">
    <property type="entry name" value="CHD"/>
    <property type="match status" value="1"/>
</dbReference>
<dbReference type="CDD" id="cd06371">
    <property type="entry name" value="PBP1_sensory_GC_DEF-like"/>
    <property type="match status" value="1"/>
</dbReference>
<dbReference type="CDD" id="cd14043">
    <property type="entry name" value="PK_GC-2D"/>
    <property type="match status" value="1"/>
</dbReference>
<dbReference type="FunFam" id="1.10.510.10:FF:000507">
    <property type="entry name" value="Guanylate cyclase"/>
    <property type="match status" value="1"/>
</dbReference>
<dbReference type="FunFam" id="3.30.70.1230:FF:000013">
    <property type="entry name" value="Guanylate cyclase"/>
    <property type="match status" value="1"/>
</dbReference>
<dbReference type="FunFam" id="3.40.50.2300:FF:000114">
    <property type="entry name" value="Guanylate cyclase"/>
    <property type="match status" value="1"/>
</dbReference>
<dbReference type="Gene3D" id="3.40.50.2300">
    <property type="match status" value="1"/>
</dbReference>
<dbReference type="Gene3D" id="6.10.250.780">
    <property type="match status" value="1"/>
</dbReference>
<dbReference type="Gene3D" id="3.30.70.1230">
    <property type="entry name" value="Nucleotide cyclase"/>
    <property type="match status" value="1"/>
</dbReference>
<dbReference type="Gene3D" id="1.10.510.10">
    <property type="entry name" value="Transferase(Phosphotransferase) domain 1"/>
    <property type="match status" value="1"/>
</dbReference>
<dbReference type="InterPro" id="IPR001054">
    <property type="entry name" value="A/G_cyclase"/>
</dbReference>
<dbReference type="InterPro" id="IPR018297">
    <property type="entry name" value="A/G_cyclase_CS"/>
</dbReference>
<dbReference type="InterPro" id="IPR001828">
    <property type="entry name" value="ANF_lig-bd_rcpt"/>
</dbReference>
<dbReference type="InterPro" id="IPR050401">
    <property type="entry name" value="Cyclic_nucleotide_synthase"/>
</dbReference>
<dbReference type="InterPro" id="IPR011645">
    <property type="entry name" value="HNOB_dom_associated"/>
</dbReference>
<dbReference type="InterPro" id="IPR011009">
    <property type="entry name" value="Kinase-like_dom_sf"/>
</dbReference>
<dbReference type="InterPro" id="IPR029787">
    <property type="entry name" value="Nucleotide_cyclase"/>
</dbReference>
<dbReference type="InterPro" id="IPR028082">
    <property type="entry name" value="Peripla_BP_I"/>
</dbReference>
<dbReference type="InterPro" id="IPR000719">
    <property type="entry name" value="Prot_kinase_dom"/>
</dbReference>
<dbReference type="InterPro" id="IPR001245">
    <property type="entry name" value="Ser-Thr/Tyr_kinase_cat_dom"/>
</dbReference>
<dbReference type="PANTHER" id="PTHR11920">
    <property type="entry name" value="GUANYLYL CYCLASE"/>
    <property type="match status" value="1"/>
</dbReference>
<dbReference type="PANTHER" id="PTHR11920:SF228">
    <property type="entry name" value="RETINAL GUANYLYL CYCLASE 1"/>
    <property type="match status" value="1"/>
</dbReference>
<dbReference type="Pfam" id="PF01094">
    <property type="entry name" value="ANF_receptor"/>
    <property type="match status" value="1"/>
</dbReference>
<dbReference type="Pfam" id="PF00211">
    <property type="entry name" value="Guanylate_cyc"/>
    <property type="match status" value="1"/>
</dbReference>
<dbReference type="Pfam" id="PF07701">
    <property type="entry name" value="HNOBA"/>
    <property type="match status" value="1"/>
</dbReference>
<dbReference type="Pfam" id="PF07714">
    <property type="entry name" value="PK_Tyr_Ser-Thr"/>
    <property type="match status" value="1"/>
</dbReference>
<dbReference type="SMART" id="SM00044">
    <property type="entry name" value="CYCc"/>
    <property type="match status" value="1"/>
</dbReference>
<dbReference type="SUPFAM" id="SSF55073">
    <property type="entry name" value="Nucleotide cyclase"/>
    <property type="match status" value="1"/>
</dbReference>
<dbReference type="SUPFAM" id="SSF53822">
    <property type="entry name" value="Periplasmic binding protein-like I"/>
    <property type="match status" value="1"/>
</dbReference>
<dbReference type="SUPFAM" id="SSF56112">
    <property type="entry name" value="Protein kinase-like (PK-like)"/>
    <property type="match status" value="1"/>
</dbReference>
<dbReference type="PROSITE" id="PS00452">
    <property type="entry name" value="GUANYLATE_CYCLASE_1"/>
    <property type="match status" value="1"/>
</dbReference>
<dbReference type="PROSITE" id="PS50125">
    <property type="entry name" value="GUANYLATE_CYCLASE_2"/>
    <property type="match status" value="1"/>
</dbReference>
<dbReference type="PROSITE" id="PS50011">
    <property type="entry name" value="PROTEIN_KINASE_DOM"/>
    <property type="match status" value="1"/>
</dbReference>
<feature type="signal peptide" evidence="3">
    <location>
        <begin position="1"/>
        <end position="54"/>
    </location>
</feature>
<feature type="chain" id="PRO_0000012384" description="Retinal guanylyl cyclase 1">
    <location>
        <begin position="55"/>
        <end position="1108"/>
    </location>
</feature>
<feature type="topological domain" description="Extracellular" evidence="5">
    <location>
        <begin position="55"/>
        <end position="465"/>
    </location>
</feature>
<feature type="transmembrane region" description="Helical" evidence="5">
    <location>
        <begin position="466"/>
        <end position="490"/>
    </location>
</feature>
<feature type="topological domain" description="Cytoplasmic" evidence="5">
    <location>
        <begin position="491"/>
        <end position="1108"/>
    </location>
</feature>
<feature type="domain" description="Protein kinase" evidence="7">
    <location>
        <begin position="520"/>
        <end position="811"/>
    </location>
</feature>
<feature type="domain" description="Guanylate cyclase" evidence="6">
    <location>
        <begin position="883"/>
        <end position="1013"/>
    </location>
</feature>
<feature type="region of interest" description="Disordered" evidence="8">
    <location>
        <begin position="520"/>
        <end position="552"/>
    </location>
</feature>
<feature type="region of interest" description="Disordered" evidence="8">
    <location>
        <begin position="1069"/>
        <end position="1108"/>
    </location>
</feature>
<feature type="compositionally biased region" description="Polar residues" evidence="8">
    <location>
        <begin position="529"/>
        <end position="552"/>
    </location>
</feature>
<feature type="glycosylation site" description="N-linked (GlcNAc...) asparagine" evidence="5">
    <location>
        <position position="300"/>
    </location>
</feature>
<feature type="disulfide bond" evidence="1">
    <location>
        <begin position="108"/>
        <end position="136"/>
    </location>
</feature>
<feature type="disulfide bond" description="Interchain" evidence="1">
    <location>
        <position position="452"/>
    </location>
</feature>
<feature type="disulfide bond" description="Interchain" evidence="1">
    <location>
        <position position="460"/>
    </location>
</feature>